<comment type="function">
    <text evidence="4 5 6 7 8">Constant region of T cell receptor (TR) gamma chain that participates in the antigen recognition (PubMed:24600447). Gamma-delta TRs recognize a variety of self and foreign non-peptide antigens frequently expressed at the epithelial boundaries between the host and external environment, including endogenous lipids presented by MH-like protein CD1D and phosphoantigens presented by butyrophilin-like molecule BTN3A1. Upon antigen recognition induces rapid, innate-like immune responses involved in pathogen clearance and tissue repair (PubMed:23348415, PubMed:28920588). Binding of gamma-delta TR complex to antigen triggers phosphorylation of immunoreceptor tyrosine-based activation motifs (ITAMs) in the CD3 chains by the LCK and FYN kinases, allowing the recruitment, phosphorylation, and activation of ZAP70 that facilitates phosphorylation of the scaffolding proteins LCP2 and LAT. This lead to the formation of a supramolecular signalosome that recruits the phospholipase PLCG1, resulting in calcium mobilization and ERK activation, ultimately leading to T cell expansion and differentiation into effector cells (PubMed:25674089). Gamma-delta TRs are produced through somatic rearrangement of a limited repertoire of variable (V), diversity (D), and joining (J) genes. The potential diversity of gamma-delta TRs is conferred by the unique ability to rearrange (D) genes in tandem and to utilize all three reading frames. The combinatorial diversity is considerably increased by the sequence exonuclease trimming and random nucleotide (N) region additions which occur during the V-(D)-J rearrangements (PubMed:24387714).</text>
</comment>
<comment type="subunit">
    <text evidence="7">Gamma-delta TR is a heterodimer composed of a gamma and delta chain; disulfide-linked. The gamma-delta TR is associated with the transmembrane signaling CD3 coreceptor proteins following the stoichiometry: a single gamma-delta TR heterodimer associates with one CD3D-CD3E heterodimer, one CD3G-CD3E heterodimer and one CD247 homodimer forming a stable octameric structure. Upon activation, gamma-delta TR complex associates with FCER1G to initiate intracellular signaling.</text>
</comment>
<comment type="subcellular location">
    <subcellularLocation>
        <location evidence="10">Cell membrane</location>
    </subcellularLocation>
</comment>
<comment type="polymorphism">
    <text evidence="10">There are several alleles. The sequence shown is that of IMGT allele TRGC2*06.</text>
</comment>
<organism>
    <name type="scientific">Homo sapiens</name>
    <name type="common">Human</name>
    <dbReference type="NCBI Taxonomy" id="9606"/>
    <lineage>
        <taxon>Eukaryota</taxon>
        <taxon>Metazoa</taxon>
        <taxon>Chordata</taxon>
        <taxon>Craniata</taxon>
        <taxon>Vertebrata</taxon>
        <taxon>Euteleostomi</taxon>
        <taxon>Mammalia</taxon>
        <taxon>Eutheria</taxon>
        <taxon>Euarchontoglires</taxon>
        <taxon>Primates</taxon>
        <taxon>Haplorrhini</taxon>
        <taxon>Catarrhini</taxon>
        <taxon>Hominidae</taxon>
        <taxon>Homo</taxon>
    </lineage>
</organism>
<protein>
    <recommendedName>
        <fullName evidence="9">T cell receptor gamma constant 2</fullName>
    </recommendedName>
</protein>
<evidence type="ECO:0000255" key="1"/>
<evidence type="ECO:0000255" key="2">
    <source>
        <dbReference type="PROSITE-ProRule" id="PRU00114"/>
    </source>
</evidence>
<evidence type="ECO:0000255" key="3">
    <source>
        <dbReference type="PROSITE-ProRule" id="PRU00498"/>
    </source>
</evidence>
<evidence type="ECO:0000303" key="4">
    <source>
    </source>
</evidence>
<evidence type="ECO:0000303" key="5">
    <source>
    </source>
</evidence>
<evidence type="ECO:0000303" key="6">
    <source>
    </source>
</evidence>
<evidence type="ECO:0000303" key="7">
    <source>
    </source>
</evidence>
<evidence type="ECO:0000303" key="8">
    <source>
    </source>
</evidence>
<evidence type="ECO:0000303" key="9">
    <source ref="4"/>
</evidence>
<evidence type="ECO:0000305" key="10"/>
<evidence type="ECO:0000312" key="11">
    <source>
        <dbReference type="HGNC" id="HGNC:12276"/>
    </source>
</evidence>
<evidence type="ECO:0007829" key="12">
    <source>
        <dbReference type="PDB" id="1HXM"/>
    </source>
</evidence>
<gene>
    <name evidence="9" type="primary">TRGC2</name>
    <name evidence="11" type="synonym">TCRGC2</name>
</gene>
<name>TRGC2_HUMAN</name>
<feature type="chain" id="PRO_0000184530" description="T cell receptor gamma constant 2">
    <location>
        <begin position="1" status="less than"/>
        <end position="189"/>
    </location>
</feature>
<feature type="transmembrane region" description="Helical" evidence="1">
    <location>
        <begin position="155"/>
        <end position="177"/>
    </location>
</feature>
<feature type="domain" description="Ig-like" evidence="2">
    <location>
        <begin position="10"/>
        <end position="104"/>
    </location>
</feature>
<feature type="glycosylation site" description="N-linked (GlcNAc...) asparagine" evidence="3">
    <location>
        <position position="66"/>
    </location>
</feature>
<feature type="glycosylation site" description="N-linked (GlcNAc...) asparagine" evidence="3">
    <location>
        <position position="120"/>
    </location>
</feature>
<feature type="glycosylation site" description="N-linked (GlcNAc...) asparagine" evidence="3">
    <location>
        <position position="136"/>
    </location>
</feature>
<feature type="glycosylation site" description="N-linked (GlcNAc...) asparagine" evidence="3">
    <location>
        <position position="142"/>
    </location>
</feature>
<feature type="glycosylation site" description="N-linked (GlcNAc...) asparagine" evidence="3">
    <location>
        <position position="151"/>
    </location>
</feature>
<feature type="disulfide bond" evidence="2">
    <location>
        <begin position="32"/>
        <end position="88"/>
    </location>
</feature>
<feature type="sequence conflict" description="In Ref. 1; M13231." evidence="10" ref="1">
    <original>YN</original>
    <variation>DS</variation>
    <location>
        <begin position="119"/>
        <end position="120"/>
    </location>
</feature>
<feature type="sequence conflict" description="In Ref. 1; M13231." evidence="10" ref="1">
    <original>T</original>
    <variation>M</variation>
    <location>
        <position position="157"/>
    </location>
</feature>
<feature type="sequence conflict" description="In Ref. 1; M13231." evidence="10" ref="1">
    <original>R</original>
    <variation>G</variation>
    <location>
        <position position="178"/>
    </location>
</feature>
<feature type="non-terminal residue">
    <location>
        <position position="1"/>
    </location>
</feature>
<feature type="helix" evidence="12">
    <location>
        <begin position="19"/>
        <end position="23"/>
    </location>
</feature>
<feature type="strand" evidence="12">
    <location>
        <begin position="24"/>
        <end position="26"/>
    </location>
</feature>
<feature type="strand" evidence="12">
    <location>
        <begin position="28"/>
        <end position="39"/>
    </location>
</feature>
<feature type="strand" evidence="12">
    <location>
        <begin position="42"/>
        <end position="51"/>
    </location>
</feature>
<feature type="strand" evidence="12">
    <location>
        <begin position="66"/>
        <end position="77"/>
    </location>
</feature>
<feature type="helix" evidence="12">
    <location>
        <begin position="80"/>
        <end position="83"/>
    </location>
</feature>
<feature type="strand" evidence="12">
    <location>
        <begin position="86"/>
        <end position="92"/>
    </location>
</feature>
<feature type="helix" evidence="12">
    <location>
        <begin position="96"/>
        <end position="98"/>
    </location>
</feature>
<feature type="strand" evidence="12">
    <location>
        <begin position="101"/>
        <end position="105"/>
    </location>
</feature>
<sequence>DKQLDADVSPKPTIFLPSIAETKLQKAGTYLCLLEKFFPDIIKIHWQEKKSNTILGSQEGNTMKTNDTYMKFSWLTVPEESLDKEHRCIVRHENNKNGIDQEIIFPPIKTDVTTVDPKYNYSKDANDVITMDPKDNWSKDANDTLLLQLTNTSAYYTYLLLLLKSVVYFAIITCCLLRRTAFCCNGEKS</sequence>
<keyword id="KW-0002">3D-structure</keyword>
<keyword id="KW-1064">Adaptive immunity</keyword>
<keyword id="KW-1003">Cell membrane</keyword>
<keyword id="KW-1015">Disulfide bond</keyword>
<keyword id="KW-0325">Glycoprotein</keyword>
<keyword id="KW-0391">Immunity</keyword>
<keyword id="KW-0393">Immunoglobulin domain</keyword>
<keyword id="KW-0472">Membrane</keyword>
<keyword id="KW-1267">Proteomics identification</keyword>
<keyword id="KW-0675">Receptor</keyword>
<keyword id="KW-1185">Reference proteome</keyword>
<keyword id="KW-1279">T cell receptor</keyword>
<keyword id="KW-0812">Transmembrane</keyword>
<keyword id="KW-1133">Transmembrane helix</keyword>
<proteinExistence type="evidence at protein level"/>
<reference key="1">
    <citation type="journal article" date="1986" name="Proc. Natl. Acad. Sci. U.S.A.">
        <title>Cloning and sequence analysis of complementary DNA encoding an aberrantly rearranged human T-cell gamma chain.</title>
        <authorList>
            <person name="Dialynas D.P."/>
            <person name="Murre C."/>
            <person name="Quertermous T."/>
            <person name="Boss J.M."/>
            <person name="Leiden J.M."/>
            <person name="Seidman J.G."/>
            <person name="Strominger J.L."/>
        </authorList>
    </citation>
    <scope>NUCLEOTIDE SEQUENCE [MRNA]</scope>
</reference>
<reference key="2">
    <citation type="journal article" date="2003" name="Nature">
        <title>The DNA sequence of human chromosome 7.</title>
        <authorList>
            <person name="Hillier L.W."/>
            <person name="Fulton R.S."/>
            <person name="Fulton L.A."/>
            <person name="Graves T.A."/>
            <person name="Pepin K.H."/>
            <person name="Wagner-McPherson C."/>
            <person name="Layman D."/>
            <person name="Maas J."/>
            <person name="Jaeger S."/>
            <person name="Walker R."/>
            <person name="Wylie K."/>
            <person name="Sekhon M."/>
            <person name="Becker M.C."/>
            <person name="O'Laughlin M.D."/>
            <person name="Schaller M.E."/>
            <person name="Fewell G.A."/>
            <person name="Delehaunty K.D."/>
            <person name="Miner T.L."/>
            <person name="Nash W.E."/>
            <person name="Cordes M."/>
            <person name="Du H."/>
            <person name="Sun H."/>
            <person name="Edwards J."/>
            <person name="Bradshaw-Cordum H."/>
            <person name="Ali J."/>
            <person name="Andrews S."/>
            <person name="Isak A."/>
            <person name="Vanbrunt A."/>
            <person name="Nguyen C."/>
            <person name="Du F."/>
            <person name="Lamar B."/>
            <person name="Courtney L."/>
            <person name="Kalicki J."/>
            <person name="Ozersky P."/>
            <person name="Bielicki L."/>
            <person name="Scott K."/>
            <person name="Holmes A."/>
            <person name="Harkins R."/>
            <person name="Harris A."/>
            <person name="Strong C.M."/>
            <person name="Hou S."/>
            <person name="Tomlinson C."/>
            <person name="Dauphin-Kohlberg S."/>
            <person name="Kozlowicz-Reilly A."/>
            <person name="Leonard S."/>
            <person name="Rohlfing T."/>
            <person name="Rock S.M."/>
            <person name="Tin-Wollam A.-M."/>
            <person name="Abbott A."/>
            <person name="Minx P."/>
            <person name="Maupin R."/>
            <person name="Strowmatt C."/>
            <person name="Latreille P."/>
            <person name="Miller N."/>
            <person name="Johnson D."/>
            <person name="Murray J."/>
            <person name="Woessner J.P."/>
            <person name="Wendl M.C."/>
            <person name="Yang S.-P."/>
            <person name="Schultz B.R."/>
            <person name="Wallis J.W."/>
            <person name="Spieth J."/>
            <person name="Bieri T.A."/>
            <person name="Nelson J.O."/>
            <person name="Berkowicz N."/>
            <person name="Wohldmann P.E."/>
            <person name="Cook L.L."/>
            <person name="Hickenbotham M.T."/>
            <person name="Eldred J."/>
            <person name="Williams D."/>
            <person name="Bedell J.A."/>
            <person name="Mardis E.R."/>
            <person name="Clifton S.W."/>
            <person name="Chissoe S.L."/>
            <person name="Marra M.A."/>
            <person name="Raymond C."/>
            <person name="Haugen E."/>
            <person name="Gillett W."/>
            <person name="Zhou Y."/>
            <person name="James R."/>
            <person name="Phelps K."/>
            <person name="Iadanoto S."/>
            <person name="Bubb K."/>
            <person name="Simms E."/>
            <person name="Levy R."/>
            <person name="Clendenning J."/>
            <person name="Kaul R."/>
            <person name="Kent W.J."/>
            <person name="Furey T.S."/>
            <person name="Baertsch R.A."/>
            <person name="Brent M.R."/>
            <person name="Keibler E."/>
            <person name="Flicek P."/>
            <person name="Bork P."/>
            <person name="Suyama M."/>
            <person name="Bailey J.A."/>
            <person name="Portnoy M.E."/>
            <person name="Torrents D."/>
            <person name="Chinwalla A.T."/>
            <person name="Gish W.R."/>
            <person name="Eddy S.R."/>
            <person name="McPherson J.D."/>
            <person name="Olson M.V."/>
            <person name="Eichler E.E."/>
            <person name="Green E.D."/>
            <person name="Waterston R.H."/>
            <person name="Wilson R.K."/>
        </authorList>
    </citation>
    <scope>NUCLEOTIDE SEQUENCE [LARGE SCALE GENOMIC DNA] (IMGT ALLELE TRGC2*06)</scope>
</reference>
<reference key="3">
    <citation type="journal article" date="1986" name="Proc. Natl. Acad. Sci. U.S.A.">
        <title>Genetic polymorphism and exon changes of the constant regions of the human T-cell rearranging gene gamma.</title>
        <authorList>
            <person name="Lefranc M.P."/>
            <person name="Forster A."/>
            <person name="Rabbitts T.H."/>
        </authorList>
    </citation>
    <scope>NUCLEOTIDE SEQUENCE [GENOMIC DNA] OF 2-110</scope>
</reference>
<reference key="4">
    <citation type="book" date="2001" name="The T Cell Receptor FactsBook.">
        <title>The T Cell Receptor FactsBook.</title>
        <editorList>
            <person name="Lefranc M.P."/>
            <person name="Lefranc G."/>
        </editorList>
        <authorList>
            <person name="Lefranc M.P."/>
            <person name="Lefranc G."/>
        </authorList>
    </citation>
    <scope>NOMENCLATURE</scope>
</reference>
<reference key="5">
    <citation type="journal article" date="2013" name="Nat. Rev. Immunol.">
        <title>Six-of-the-best: unique contributions of gammadelta T cells to immunology.</title>
        <authorList>
            <person name="Vantourout P."/>
            <person name="Hayday A."/>
        </authorList>
    </citation>
    <scope>REVIEW ON FUNCTION AND ANTIGEN RECOGNITION</scope>
</reference>
<reference key="6">
    <citation type="journal article" date="2014" name="Annu. Rev. Immunol.">
        <title>gammadelta T cells: first line of defense and beyond.</title>
        <authorList>
            <person name="Chien Y.H."/>
            <person name="Meyer C."/>
            <person name="Bonneville M."/>
        </authorList>
    </citation>
    <scope>REVIEW ON GAMMA DELTA T CELL RECEPTOR DIVERSITY</scope>
</reference>
<reference key="7">
    <citation type="journal article" date="2014" name="Front. Immunol.">
        <title>Immunoglobulin and T Cell Receptor Genes: IMGT((R)) and the Birth and Rise of Immunoinformatics.</title>
        <authorList>
            <person name="Lefranc M.P."/>
        </authorList>
    </citation>
    <scope>NOMENCLATURE</scope>
</reference>
<reference key="8">
    <citation type="journal article" date="2015" name="Front. Immunol.">
        <title>Five Layers of Receptor Signaling in gammadelta T-Cell Differentiation and Activation.</title>
        <authorList>
            <person name="Ribeiro S.T."/>
            <person name="Ribot J.C."/>
            <person name="Silva-Santos B."/>
        </authorList>
    </citation>
    <scope>REVIEW ON T CELL RECEPTOR SIGNALING</scope>
    <scope>SUBUNIT</scope>
</reference>
<reference key="9">
    <citation type="journal article" date="2017" name="Nat. Rev. Immunol.">
        <title>gammadelta T cells in homeostasis and host defence of epithelial barrier tissues.</title>
        <authorList>
            <person name="Nielsen M.M."/>
            <person name="Witherden D.A."/>
            <person name="Havran W.L."/>
        </authorList>
    </citation>
    <scope>REVIEW ON FUNCTION</scope>
</reference>
<reference key="10">
    <citation type="journal article" date="2001" name="Nature">
        <title>Structure of a human gammadelta T-cell antigen receptor.</title>
        <authorList>
            <person name="Allison T.J."/>
            <person name="Winter C.C."/>
            <person name="Fournie J.-J."/>
            <person name="Bonneville M."/>
            <person name="Garboczi D.N."/>
        </authorList>
    </citation>
    <scope>X-RAY CRYSTALLOGRAPHY (3.12 ANGSTROMS) OF 1-119</scope>
</reference>
<dbReference type="EMBL" id="M13231">
    <property type="status" value="NOT_ANNOTATED_CDS"/>
    <property type="molecule type" value="mRNA"/>
</dbReference>
<dbReference type="EMBL" id="AC006033">
    <property type="status" value="NOT_ANNOTATED_CDS"/>
    <property type="molecule type" value="Genomic_DNA"/>
</dbReference>
<dbReference type="EMBL" id="M15002">
    <property type="status" value="NOT_ANNOTATED_CDS"/>
    <property type="molecule type" value="Genomic_DNA"/>
</dbReference>
<dbReference type="PIR" id="A02141">
    <property type="entry name" value="RWHUGC"/>
</dbReference>
<dbReference type="PIR" id="A22340">
    <property type="entry name" value="A22340"/>
</dbReference>
<dbReference type="PDB" id="1HXM">
    <property type="method" value="X-ray"/>
    <property type="resolution" value="3.12 A"/>
    <property type="chains" value="B/D/F/H=1-119"/>
</dbReference>
<dbReference type="PDBsum" id="1HXM"/>
<dbReference type="SMR" id="P03986"/>
<dbReference type="ComplexPortal" id="CPX-6603">
    <property type="entry name" value="Gamma-delta T cell receptor complex, TRGC2 variant"/>
</dbReference>
<dbReference type="FunCoup" id="P03986">
    <property type="interactions" value="103"/>
</dbReference>
<dbReference type="IMGT_GENE-DB" id="TRGC2"/>
<dbReference type="GlyCosmos" id="P03986">
    <property type="glycosylation" value="5 sites, No reported glycans"/>
</dbReference>
<dbReference type="GlyGen" id="P03986">
    <property type="glycosylation" value="5 sites"/>
</dbReference>
<dbReference type="SwissPalm" id="P03986"/>
<dbReference type="BioMuta" id="TRGC2"/>
<dbReference type="DMDM" id="135528"/>
<dbReference type="MassIVE" id="P03986"/>
<dbReference type="UCSC" id="uc064cxi.1">
    <property type="organism name" value="human"/>
</dbReference>
<dbReference type="AGR" id="HGNC:12276"/>
<dbReference type="GeneCards" id="TRGC2"/>
<dbReference type="HGNC" id="HGNC:12276">
    <property type="gene designation" value="TRGC2"/>
</dbReference>
<dbReference type="MIM" id="615450">
    <property type="type" value="gene"/>
</dbReference>
<dbReference type="neXtProt" id="NX_P03986"/>
<dbReference type="HOGENOM" id="CLU_077975_3_2_1"/>
<dbReference type="InParanoid" id="P03986"/>
<dbReference type="OrthoDB" id="8924181at2759"/>
<dbReference type="PAN-GO" id="P03986">
    <property type="GO annotations" value="1 GO annotation based on evolutionary models"/>
</dbReference>
<dbReference type="PhylomeDB" id="P03986"/>
<dbReference type="PathwayCommons" id="P03986"/>
<dbReference type="SignaLink" id="P03986"/>
<dbReference type="EvolutionaryTrace" id="P03986"/>
<dbReference type="Pharos" id="P03986">
    <property type="development level" value="Tdark"/>
</dbReference>
<dbReference type="PRO" id="PR:P03986"/>
<dbReference type="Proteomes" id="UP000005640">
    <property type="component" value="Unplaced"/>
</dbReference>
<dbReference type="RNAct" id="P03986">
    <property type="molecule type" value="protein"/>
</dbReference>
<dbReference type="GO" id="GO:0009897">
    <property type="term" value="C:external side of plasma membrane"/>
    <property type="evidence" value="ECO:0000318"/>
    <property type="project" value="GO_Central"/>
</dbReference>
<dbReference type="GO" id="GO:0042106">
    <property type="term" value="C:gamma-delta T cell receptor complex"/>
    <property type="evidence" value="ECO:0000303"/>
    <property type="project" value="ComplexPortal"/>
</dbReference>
<dbReference type="GO" id="GO:0005886">
    <property type="term" value="C:plasma membrane"/>
    <property type="evidence" value="ECO:0000303"/>
    <property type="project" value="UniProtKB"/>
</dbReference>
<dbReference type="GO" id="GO:0004888">
    <property type="term" value="F:transmembrane signaling receptor activity"/>
    <property type="evidence" value="ECO:0000303"/>
    <property type="project" value="UniProtKB"/>
</dbReference>
<dbReference type="GO" id="GO:0002250">
    <property type="term" value="P:adaptive immune response"/>
    <property type="evidence" value="ECO:0000303"/>
    <property type="project" value="ComplexPortal"/>
</dbReference>
<dbReference type="GO" id="GO:0006955">
    <property type="term" value="P:immune response"/>
    <property type="evidence" value="ECO:0000303"/>
    <property type="project" value="UniProtKB"/>
</dbReference>
<dbReference type="GO" id="GO:0050852">
    <property type="term" value="P:T cell receptor signaling pathway"/>
    <property type="evidence" value="ECO:0000303"/>
    <property type="project" value="ComplexPortal"/>
</dbReference>
<dbReference type="CDD" id="cd07697">
    <property type="entry name" value="IgC1_TCR_gamma"/>
    <property type="match status" value="1"/>
</dbReference>
<dbReference type="FunFam" id="2.60.40.10:FF:001083">
    <property type="entry name" value="T cell receptor gamma constant 2"/>
    <property type="match status" value="1"/>
</dbReference>
<dbReference type="Gene3D" id="2.60.40.10">
    <property type="entry name" value="Immunoglobulins"/>
    <property type="match status" value="1"/>
</dbReference>
<dbReference type="InterPro" id="IPR007110">
    <property type="entry name" value="Ig-like_dom"/>
</dbReference>
<dbReference type="InterPro" id="IPR036179">
    <property type="entry name" value="Ig-like_dom_sf"/>
</dbReference>
<dbReference type="InterPro" id="IPR013783">
    <property type="entry name" value="Ig-like_fold"/>
</dbReference>
<dbReference type="InterPro" id="IPR003597">
    <property type="entry name" value="Ig_C1-set"/>
</dbReference>
<dbReference type="InterPro" id="IPR051117">
    <property type="entry name" value="TRG_var/const_region"/>
</dbReference>
<dbReference type="PANTHER" id="PTHR19256:SF65">
    <property type="entry name" value="T CELL RECEPTOR GAMMA CONSTANT 1-RELATED"/>
    <property type="match status" value="1"/>
</dbReference>
<dbReference type="PANTHER" id="PTHR19256">
    <property type="entry name" value="T-CELL RECEPTOR GAMMA CHAIN"/>
    <property type="match status" value="1"/>
</dbReference>
<dbReference type="Pfam" id="PF07654">
    <property type="entry name" value="C1-set"/>
    <property type="match status" value="1"/>
</dbReference>
<dbReference type="SMART" id="SM00407">
    <property type="entry name" value="IGc1"/>
    <property type="match status" value="1"/>
</dbReference>
<dbReference type="SUPFAM" id="SSF48726">
    <property type="entry name" value="Immunoglobulin"/>
    <property type="match status" value="1"/>
</dbReference>
<dbReference type="PROSITE" id="PS50835">
    <property type="entry name" value="IG_LIKE"/>
    <property type="match status" value="1"/>
</dbReference>
<accession>P03986</accession>
<accession>A0A075B6R6</accession>